<keyword id="KW-0488">Methylation</keyword>
<keyword id="KW-0687">Ribonucleoprotein</keyword>
<keyword id="KW-0689">Ribosomal protein</keyword>
<keyword id="KW-0694">RNA-binding</keyword>
<keyword id="KW-0699">rRNA-binding</keyword>
<keyword id="KW-0820">tRNA-binding</keyword>
<proteinExistence type="inferred from homology"/>
<reference key="1">
    <citation type="journal article" date="2006" name="Nat. Biotechnol.">
        <title>Complete genome sequence of the entomopathogenic and metabolically versatile soil bacterium Pseudomonas entomophila.</title>
        <authorList>
            <person name="Vodovar N."/>
            <person name="Vallenet D."/>
            <person name="Cruveiller S."/>
            <person name="Rouy Z."/>
            <person name="Barbe V."/>
            <person name="Acosta C."/>
            <person name="Cattolico L."/>
            <person name="Jubin C."/>
            <person name="Lajus A."/>
            <person name="Segurens B."/>
            <person name="Vacherie B."/>
            <person name="Wincker P."/>
            <person name="Weissenbach J."/>
            <person name="Lemaitre B."/>
            <person name="Medigue C."/>
            <person name="Boccard F."/>
        </authorList>
    </citation>
    <scope>NUCLEOTIDE SEQUENCE [LARGE SCALE GENOMIC DNA]</scope>
    <source>
        <strain>L48</strain>
    </source>
</reference>
<comment type="function">
    <text evidence="2">With S4 and S5 plays an important role in translational accuracy.</text>
</comment>
<comment type="function">
    <text evidence="2">Interacts with and stabilizes bases of the 16S rRNA that are involved in tRNA selection in the A site and with the mRNA backbone. Located at the interface of the 30S and 50S subunits, it traverses the body of the 30S subunit contacting proteins on the other side and probably holding the rRNA structure together. The combined cluster of proteins S8, S12 and S17 appears to hold together the shoulder and platform of the 30S subunit.</text>
</comment>
<comment type="subunit">
    <text evidence="2">Part of the 30S ribosomal subunit. Contacts proteins S8 and S17. May interact with IF1 in the 30S initiation complex.</text>
</comment>
<comment type="similarity">
    <text evidence="2">Belongs to the universal ribosomal protein uS12 family.</text>
</comment>
<name>RS12_PSEE4</name>
<feature type="chain" id="PRO_0000296019" description="Small ribosomal subunit protein uS12">
    <location>
        <begin position="1"/>
        <end position="123"/>
    </location>
</feature>
<feature type="region of interest" description="Disordered" evidence="3">
    <location>
        <begin position="1"/>
        <end position="22"/>
    </location>
</feature>
<feature type="region of interest" description="Disordered" evidence="3">
    <location>
        <begin position="100"/>
        <end position="123"/>
    </location>
</feature>
<feature type="compositionally biased region" description="Basic residues" evidence="3">
    <location>
        <begin position="111"/>
        <end position="123"/>
    </location>
</feature>
<feature type="modified residue" description="3-methylthioaspartic acid" evidence="1">
    <location>
        <position position="89"/>
    </location>
</feature>
<dbReference type="EMBL" id="CT573326">
    <property type="protein sequence ID" value="CAK13431.1"/>
    <property type="molecule type" value="Genomic_DNA"/>
</dbReference>
<dbReference type="RefSeq" id="WP_003255492.1">
    <property type="nucleotide sequence ID" value="NC_008027.1"/>
</dbReference>
<dbReference type="SMR" id="Q1IFX1"/>
<dbReference type="STRING" id="384676.PSEEN0484"/>
<dbReference type="GeneID" id="93675517"/>
<dbReference type="KEGG" id="pen:PSEEN0484"/>
<dbReference type="eggNOG" id="COG0048">
    <property type="taxonomic scope" value="Bacteria"/>
</dbReference>
<dbReference type="HOGENOM" id="CLU_104295_1_2_6"/>
<dbReference type="OrthoDB" id="9802366at2"/>
<dbReference type="Proteomes" id="UP000000658">
    <property type="component" value="Chromosome"/>
</dbReference>
<dbReference type="GO" id="GO:0015935">
    <property type="term" value="C:small ribosomal subunit"/>
    <property type="evidence" value="ECO:0007669"/>
    <property type="project" value="InterPro"/>
</dbReference>
<dbReference type="GO" id="GO:0019843">
    <property type="term" value="F:rRNA binding"/>
    <property type="evidence" value="ECO:0007669"/>
    <property type="project" value="UniProtKB-UniRule"/>
</dbReference>
<dbReference type="GO" id="GO:0003735">
    <property type="term" value="F:structural constituent of ribosome"/>
    <property type="evidence" value="ECO:0007669"/>
    <property type="project" value="InterPro"/>
</dbReference>
<dbReference type="GO" id="GO:0000049">
    <property type="term" value="F:tRNA binding"/>
    <property type="evidence" value="ECO:0007669"/>
    <property type="project" value="UniProtKB-UniRule"/>
</dbReference>
<dbReference type="GO" id="GO:0006412">
    <property type="term" value="P:translation"/>
    <property type="evidence" value="ECO:0007669"/>
    <property type="project" value="UniProtKB-UniRule"/>
</dbReference>
<dbReference type="CDD" id="cd03368">
    <property type="entry name" value="Ribosomal_S12"/>
    <property type="match status" value="1"/>
</dbReference>
<dbReference type="FunFam" id="2.40.50.140:FF:000001">
    <property type="entry name" value="30S ribosomal protein S12"/>
    <property type="match status" value="1"/>
</dbReference>
<dbReference type="Gene3D" id="2.40.50.140">
    <property type="entry name" value="Nucleic acid-binding proteins"/>
    <property type="match status" value="1"/>
</dbReference>
<dbReference type="HAMAP" id="MF_00403_B">
    <property type="entry name" value="Ribosomal_uS12_B"/>
    <property type="match status" value="1"/>
</dbReference>
<dbReference type="InterPro" id="IPR012340">
    <property type="entry name" value="NA-bd_OB-fold"/>
</dbReference>
<dbReference type="InterPro" id="IPR006032">
    <property type="entry name" value="Ribosomal_uS12"/>
</dbReference>
<dbReference type="InterPro" id="IPR005679">
    <property type="entry name" value="Ribosomal_uS12_bac"/>
</dbReference>
<dbReference type="NCBIfam" id="TIGR00981">
    <property type="entry name" value="rpsL_bact"/>
    <property type="match status" value="1"/>
</dbReference>
<dbReference type="PANTHER" id="PTHR11652">
    <property type="entry name" value="30S RIBOSOMAL PROTEIN S12 FAMILY MEMBER"/>
    <property type="match status" value="1"/>
</dbReference>
<dbReference type="Pfam" id="PF00164">
    <property type="entry name" value="Ribosom_S12_S23"/>
    <property type="match status" value="1"/>
</dbReference>
<dbReference type="PIRSF" id="PIRSF002133">
    <property type="entry name" value="Ribosomal_S12/S23"/>
    <property type="match status" value="1"/>
</dbReference>
<dbReference type="PRINTS" id="PR01034">
    <property type="entry name" value="RIBOSOMALS12"/>
</dbReference>
<dbReference type="SUPFAM" id="SSF50249">
    <property type="entry name" value="Nucleic acid-binding proteins"/>
    <property type="match status" value="1"/>
</dbReference>
<dbReference type="PROSITE" id="PS00055">
    <property type="entry name" value="RIBOSOMAL_S12"/>
    <property type="match status" value="1"/>
</dbReference>
<gene>
    <name evidence="2" type="primary">rpsL</name>
    <name type="ordered locus">PSEEN0484</name>
</gene>
<sequence>MATINQLVRQPRKRSVEKSDVPALQNCPQRRGVCTRVYTTTPKKPNSALRKVCRVRLTNGFEVSSYIGGEGHNLQEHSVVLIRGGRVKDLPGVRYHTVRGSLDTSGVKGRNQGRSKYGTKRPK</sequence>
<accession>Q1IFX1</accession>
<evidence type="ECO:0000250" key="1"/>
<evidence type="ECO:0000255" key="2">
    <source>
        <dbReference type="HAMAP-Rule" id="MF_00403"/>
    </source>
</evidence>
<evidence type="ECO:0000256" key="3">
    <source>
        <dbReference type="SAM" id="MobiDB-lite"/>
    </source>
</evidence>
<evidence type="ECO:0000305" key="4"/>
<organism>
    <name type="scientific">Pseudomonas entomophila (strain L48)</name>
    <dbReference type="NCBI Taxonomy" id="384676"/>
    <lineage>
        <taxon>Bacteria</taxon>
        <taxon>Pseudomonadati</taxon>
        <taxon>Pseudomonadota</taxon>
        <taxon>Gammaproteobacteria</taxon>
        <taxon>Pseudomonadales</taxon>
        <taxon>Pseudomonadaceae</taxon>
        <taxon>Pseudomonas</taxon>
    </lineage>
</organism>
<protein>
    <recommendedName>
        <fullName evidence="2">Small ribosomal subunit protein uS12</fullName>
    </recommendedName>
    <alternativeName>
        <fullName evidence="4">30S ribosomal protein S12</fullName>
    </alternativeName>
</protein>